<feature type="chain" id="PRO_0000120936" description="RNA exonuclease 3">
    <location>
        <begin position="1"/>
        <end position="757"/>
    </location>
</feature>
<feature type="domain" description="Exonuclease">
    <location>
        <begin position="597"/>
        <end position="751"/>
    </location>
</feature>
<feature type="region of interest" description="Disordered" evidence="2">
    <location>
        <begin position="56"/>
        <end position="259"/>
    </location>
</feature>
<feature type="region of interest" description="Disordered" evidence="2">
    <location>
        <begin position="474"/>
        <end position="590"/>
    </location>
</feature>
<feature type="compositionally biased region" description="Basic and acidic residues" evidence="2">
    <location>
        <begin position="120"/>
        <end position="132"/>
    </location>
</feature>
<feature type="compositionally biased region" description="Polar residues" evidence="2">
    <location>
        <begin position="145"/>
        <end position="172"/>
    </location>
</feature>
<feature type="compositionally biased region" description="Polar residues" evidence="2">
    <location>
        <begin position="202"/>
        <end position="223"/>
    </location>
</feature>
<feature type="compositionally biased region" description="Polar residues" evidence="2">
    <location>
        <begin position="230"/>
        <end position="240"/>
    </location>
</feature>
<feature type="compositionally biased region" description="Low complexity" evidence="2">
    <location>
        <begin position="244"/>
        <end position="253"/>
    </location>
</feature>
<feature type="compositionally biased region" description="Low complexity" evidence="2">
    <location>
        <begin position="474"/>
        <end position="502"/>
    </location>
</feature>
<feature type="compositionally biased region" description="Polar residues" evidence="2">
    <location>
        <begin position="503"/>
        <end position="516"/>
    </location>
</feature>
<feature type="compositionally biased region" description="Basic and acidic residues" evidence="2">
    <location>
        <begin position="543"/>
        <end position="557"/>
    </location>
</feature>
<feature type="compositionally biased region" description="Basic and acidic residues" evidence="2">
    <location>
        <begin position="565"/>
        <end position="581"/>
    </location>
</feature>
<proteinExistence type="inferred from homology"/>
<dbReference type="EC" id="3.1.-.-"/>
<dbReference type="EMBL" id="CR382128">
    <property type="protein sequence ID" value="CAG82848.1"/>
    <property type="molecule type" value="Genomic_DNA"/>
</dbReference>
<dbReference type="RefSeq" id="XP_500615.1">
    <property type="nucleotide sequence ID" value="XM_500615.1"/>
</dbReference>
<dbReference type="SMR" id="Q6CFE7"/>
<dbReference type="STRING" id="284591.Q6CFE7"/>
<dbReference type="EnsemblFungi" id="CAG82848">
    <property type="protein sequence ID" value="CAG82848"/>
    <property type="gene ID" value="YALI0_B07689g"/>
</dbReference>
<dbReference type="KEGG" id="yli:2906951"/>
<dbReference type="VEuPathDB" id="FungiDB:YALI0_B07689g"/>
<dbReference type="HOGENOM" id="CLU_368108_0_0_1"/>
<dbReference type="InParanoid" id="Q6CFE7"/>
<dbReference type="OrthoDB" id="26963at4891"/>
<dbReference type="Proteomes" id="UP000001300">
    <property type="component" value="Chromosome B"/>
</dbReference>
<dbReference type="GO" id="GO:0005737">
    <property type="term" value="C:cytoplasm"/>
    <property type="evidence" value="ECO:0007669"/>
    <property type="project" value="UniProtKB-SubCell"/>
</dbReference>
<dbReference type="GO" id="GO:0005634">
    <property type="term" value="C:nucleus"/>
    <property type="evidence" value="ECO:0000318"/>
    <property type="project" value="GO_Central"/>
</dbReference>
<dbReference type="GO" id="GO:0004527">
    <property type="term" value="F:exonuclease activity"/>
    <property type="evidence" value="ECO:0000318"/>
    <property type="project" value="GO_Central"/>
</dbReference>
<dbReference type="GO" id="GO:0003676">
    <property type="term" value="F:nucleic acid binding"/>
    <property type="evidence" value="ECO:0007669"/>
    <property type="project" value="InterPro"/>
</dbReference>
<dbReference type="GO" id="GO:0031125">
    <property type="term" value="P:rRNA 3'-end processing"/>
    <property type="evidence" value="ECO:0000318"/>
    <property type="project" value="GO_Central"/>
</dbReference>
<dbReference type="CDD" id="cd06145">
    <property type="entry name" value="REX1_like"/>
    <property type="match status" value="1"/>
</dbReference>
<dbReference type="FunFam" id="3.30.420.10:FF:000031">
    <property type="entry name" value="RNA exonuclease 1"/>
    <property type="match status" value="1"/>
</dbReference>
<dbReference type="Gene3D" id="3.30.420.10">
    <property type="entry name" value="Ribonuclease H-like superfamily/Ribonuclease H"/>
    <property type="match status" value="1"/>
</dbReference>
<dbReference type="InterPro" id="IPR013520">
    <property type="entry name" value="Exonuclease_RNaseT/DNA_pol3"/>
</dbReference>
<dbReference type="InterPro" id="IPR034922">
    <property type="entry name" value="REX1-like_exo"/>
</dbReference>
<dbReference type="InterPro" id="IPR047021">
    <property type="entry name" value="REXO1/3/4-like"/>
</dbReference>
<dbReference type="InterPro" id="IPR012337">
    <property type="entry name" value="RNaseH-like_sf"/>
</dbReference>
<dbReference type="InterPro" id="IPR036397">
    <property type="entry name" value="RNaseH_sf"/>
</dbReference>
<dbReference type="PANTHER" id="PTHR12801:SF115">
    <property type="entry name" value="FI18136P1-RELATED"/>
    <property type="match status" value="1"/>
</dbReference>
<dbReference type="PANTHER" id="PTHR12801">
    <property type="entry name" value="RNA EXONUCLEASE REXO1 / RECO3 FAMILY MEMBER-RELATED"/>
    <property type="match status" value="1"/>
</dbReference>
<dbReference type="Pfam" id="PF00929">
    <property type="entry name" value="RNase_T"/>
    <property type="match status" value="1"/>
</dbReference>
<dbReference type="SMART" id="SM00479">
    <property type="entry name" value="EXOIII"/>
    <property type="match status" value="1"/>
</dbReference>
<dbReference type="SUPFAM" id="SSF53098">
    <property type="entry name" value="Ribonuclease H-like"/>
    <property type="match status" value="1"/>
</dbReference>
<comment type="function">
    <text evidence="1">3' to 5' exoribonuclease required for proper 3' end maturation of MRP RNA and of the U5L snRNA.</text>
</comment>
<comment type="subcellular location">
    <subcellularLocation>
        <location evidence="1">Cytoplasm</location>
    </subcellularLocation>
    <subcellularLocation>
        <location evidence="1">Nucleus</location>
    </subcellularLocation>
</comment>
<comment type="similarity">
    <text evidence="3">Belongs to the REXO1/REXO3 family.</text>
</comment>
<gene>
    <name type="primary">REX3</name>
    <name type="ordered locus">YALI0B07689g</name>
</gene>
<sequence length="757" mass="82343">MQFSGEGLFFHSPFNSPKKHMFSSSKGLFRGHPCPSIAAGQFCRLLCCPFDHPERVKRESENGSDSAEMVKRRKLEVGQGVARVAGDSSGGKLELPGARQALNQRDRPEIEGVGASPKTEGGRAEGAEKKEFASSQSSQKEQQETPHASATPQASVSPQTSAPPQHVSSSVSEDVLKQGKNGITSKSEKSSVKQPGSRDIYQPSSSREPPVSSIDTRTSSSPKSALEAVMTTSASPSQSRDGSRNTSASPSSSRDAEHLMPTTIFPCPATVPQRIAYLKAIHSALTDKRKLKFPKRAAILEELAAAKRSAGNYMVYTNECRVLVKSIKDGSWRGGKAGGTKTDSKTSGHITSSISNQLDMLASKTKPLLAQNGYPVNPDPLKSGLPSNIGIQHCDRCDKAFDVPKVDNYGSCKYHWARARMGGNSTMPEKFYPCCNQPVGMSEGCEEAPRHVYKLHDLNDLAFVIPFRTVSTSESLDTSTSTSTSTSATTSAPSAKSTKTASRPASTPTKSLTSSLDLEKSRQPFNKARRPRTIFNGPAVNQREPDITLETMKRGIGESRGQADSQERSSEPRERSARVREQPSGSCDQAGSLQTSVVAVDCEMLYTSLGMELCRVTCIDYHGKKTLDRVVRPTGRILDYNTRFSGISDINEPIITESGEKGDSISFEEAHRLILKLINKQTILVGHGLENDLIAMRLIHDRIIDTSILYPDFNPRYKTALKTLALKYLKRTIQTGEHDSMEDALAALDVVKCHLKG</sequence>
<accession>Q6CFE7</accession>
<organism>
    <name type="scientific">Yarrowia lipolytica (strain CLIB 122 / E 150)</name>
    <name type="common">Yeast</name>
    <name type="synonym">Candida lipolytica</name>
    <dbReference type="NCBI Taxonomy" id="284591"/>
    <lineage>
        <taxon>Eukaryota</taxon>
        <taxon>Fungi</taxon>
        <taxon>Dikarya</taxon>
        <taxon>Ascomycota</taxon>
        <taxon>Saccharomycotina</taxon>
        <taxon>Dipodascomycetes</taxon>
        <taxon>Dipodascales</taxon>
        <taxon>Dipodascales incertae sedis</taxon>
        <taxon>Yarrowia</taxon>
    </lineage>
</organism>
<evidence type="ECO:0000250" key="1"/>
<evidence type="ECO:0000256" key="2">
    <source>
        <dbReference type="SAM" id="MobiDB-lite"/>
    </source>
</evidence>
<evidence type="ECO:0000305" key="3"/>
<reference key="1">
    <citation type="journal article" date="2004" name="Nature">
        <title>Genome evolution in yeasts.</title>
        <authorList>
            <person name="Dujon B."/>
            <person name="Sherman D."/>
            <person name="Fischer G."/>
            <person name="Durrens P."/>
            <person name="Casaregola S."/>
            <person name="Lafontaine I."/>
            <person name="de Montigny J."/>
            <person name="Marck C."/>
            <person name="Neuveglise C."/>
            <person name="Talla E."/>
            <person name="Goffard N."/>
            <person name="Frangeul L."/>
            <person name="Aigle M."/>
            <person name="Anthouard V."/>
            <person name="Babour A."/>
            <person name="Barbe V."/>
            <person name="Barnay S."/>
            <person name="Blanchin S."/>
            <person name="Beckerich J.-M."/>
            <person name="Beyne E."/>
            <person name="Bleykasten C."/>
            <person name="Boisrame A."/>
            <person name="Boyer J."/>
            <person name="Cattolico L."/>
            <person name="Confanioleri F."/>
            <person name="de Daruvar A."/>
            <person name="Despons L."/>
            <person name="Fabre E."/>
            <person name="Fairhead C."/>
            <person name="Ferry-Dumazet H."/>
            <person name="Groppi A."/>
            <person name="Hantraye F."/>
            <person name="Hennequin C."/>
            <person name="Jauniaux N."/>
            <person name="Joyet P."/>
            <person name="Kachouri R."/>
            <person name="Kerrest A."/>
            <person name="Koszul R."/>
            <person name="Lemaire M."/>
            <person name="Lesur I."/>
            <person name="Ma L."/>
            <person name="Muller H."/>
            <person name="Nicaud J.-M."/>
            <person name="Nikolski M."/>
            <person name="Oztas S."/>
            <person name="Ozier-Kalogeropoulos O."/>
            <person name="Pellenz S."/>
            <person name="Potier S."/>
            <person name="Richard G.-F."/>
            <person name="Straub M.-L."/>
            <person name="Suleau A."/>
            <person name="Swennen D."/>
            <person name="Tekaia F."/>
            <person name="Wesolowski-Louvel M."/>
            <person name="Westhof E."/>
            <person name="Wirth B."/>
            <person name="Zeniou-Meyer M."/>
            <person name="Zivanovic Y."/>
            <person name="Bolotin-Fukuhara M."/>
            <person name="Thierry A."/>
            <person name="Bouchier C."/>
            <person name="Caudron B."/>
            <person name="Scarpelli C."/>
            <person name="Gaillardin C."/>
            <person name="Weissenbach J."/>
            <person name="Wincker P."/>
            <person name="Souciet J.-L."/>
        </authorList>
    </citation>
    <scope>NUCLEOTIDE SEQUENCE [LARGE SCALE GENOMIC DNA]</scope>
    <source>
        <strain>CLIB 122 / E 150</strain>
    </source>
</reference>
<keyword id="KW-0963">Cytoplasm</keyword>
<keyword id="KW-0269">Exonuclease</keyword>
<keyword id="KW-0378">Hydrolase</keyword>
<keyword id="KW-0540">Nuclease</keyword>
<keyword id="KW-0539">Nucleus</keyword>
<keyword id="KW-1185">Reference proteome</keyword>
<keyword id="KW-0698">rRNA processing</keyword>
<protein>
    <recommendedName>
        <fullName>RNA exonuclease 3</fullName>
        <ecNumber>3.1.-.-</ecNumber>
    </recommendedName>
</protein>
<name>REXO3_YARLI</name>